<feature type="chain" id="PRO_0000102818" description="Succinate--CoA ligase [ADP-forming] subunit beta">
    <location>
        <begin position="1"/>
        <end position="386"/>
    </location>
</feature>
<feature type="domain" description="ATP-grasp" evidence="1">
    <location>
        <begin position="9"/>
        <end position="244"/>
    </location>
</feature>
<feature type="binding site" evidence="1">
    <location>
        <position position="46"/>
    </location>
    <ligand>
        <name>ATP</name>
        <dbReference type="ChEBI" id="CHEBI:30616"/>
    </ligand>
</feature>
<feature type="binding site" evidence="1">
    <location>
        <begin position="53"/>
        <end position="55"/>
    </location>
    <ligand>
        <name>ATP</name>
        <dbReference type="ChEBI" id="CHEBI:30616"/>
    </ligand>
</feature>
<feature type="binding site" evidence="1">
    <location>
        <position position="99"/>
    </location>
    <ligand>
        <name>ATP</name>
        <dbReference type="ChEBI" id="CHEBI:30616"/>
    </ligand>
</feature>
<feature type="binding site" evidence="1">
    <location>
        <position position="102"/>
    </location>
    <ligand>
        <name>ATP</name>
        <dbReference type="ChEBI" id="CHEBI:30616"/>
    </ligand>
</feature>
<feature type="binding site" evidence="1">
    <location>
        <position position="107"/>
    </location>
    <ligand>
        <name>ATP</name>
        <dbReference type="ChEBI" id="CHEBI:30616"/>
    </ligand>
</feature>
<feature type="binding site" evidence="1">
    <location>
        <position position="199"/>
    </location>
    <ligand>
        <name>Mg(2+)</name>
        <dbReference type="ChEBI" id="CHEBI:18420"/>
    </ligand>
</feature>
<feature type="binding site" evidence="1">
    <location>
        <position position="213"/>
    </location>
    <ligand>
        <name>Mg(2+)</name>
        <dbReference type="ChEBI" id="CHEBI:18420"/>
    </ligand>
</feature>
<feature type="binding site" evidence="1">
    <location>
        <position position="264"/>
    </location>
    <ligand>
        <name>substrate</name>
        <note>ligand shared with subunit alpha</note>
    </ligand>
</feature>
<feature type="binding site" evidence="1">
    <location>
        <begin position="321"/>
        <end position="323"/>
    </location>
    <ligand>
        <name>substrate</name>
        <note>ligand shared with subunit alpha</note>
    </ligand>
</feature>
<reference key="1">
    <citation type="journal article" date="2000" name="Nucleic Acids Res.">
        <title>Complete genome sequence of the alkaliphilic bacterium Bacillus halodurans and genomic sequence comparison with Bacillus subtilis.</title>
        <authorList>
            <person name="Takami H."/>
            <person name="Nakasone K."/>
            <person name="Takaki Y."/>
            <person name="Maeno G."/>
            <person name="Sasaki R."/>
            <person name="Masui N."/>
            <person name="Fuji F."/>
            <person name="Hirama C."/>
            <person name="Nakamura Y."/>
            <person name="Ogasawara N."/>
            <person name="Kuhara S."/>
            <person name="Horikoshi K."/>
        </authorList>
    </citation>
    <scope>NUCLEOTIDE SEQUENCE [LARGE SCALE GENOMIC DNA]</scope>
    <source>
        <strain>ATCC BAA-125 / DSM 18197 / FERM 7344 / JCM 9153 / C-125</strain>
    </source>
</reference>
<sequence length="386" mass="41704">MNIHEYQGKELLRQYGVAVPNGKVAFSVDEAVEAAKELGSNVCVVKAQIHAGGRGKAGGVKVAKNLDEVRTYADEILGKTLVTHQTGPEGKEVKRLLIEEGCDIQKEYYVGLVLDRATSRVVMMASEEGGTEIEEVAEKTPEKIFKEIIDPVVGLQGFQARRLAFNINIPKELVGQAVKFMLGLYKVFVEKDCSIAEINPLVTTGDGKVMALDAKLNFDSNALYRQKAILEFRDLDEEDPKEIEASKYDLSYISLDGNIGCMVNGAGLAMATMDIIKHYNGEPANFLDVGGGATAEKVTEAFKIILSDESVKGIFVNIFGGIMKCDVIAEGVIQATKEVGLSIPLVVRLEGTNVDLGKKKLEESGLNITAADSMADGAQKIVSLVK</sequence>
<protein>
    <recommendedName>
        <fullName evidence="1">Succinate--CoA ligase [ADP-forming] subunit beta</fullName>
        <ecNumber evidence="1">6.2.1.5</ecNumber>
    </recommendedName>
    <alternativeName>
        <fullName evidence="1">Succinyl-CoA synthetase subunit beta</fullName>
        <shortName evidence="1">SCS-beta</shortName>
    </alternativeName>
</protein>
<comment type="function">
    <text evidence="1">Succinyl-CoA synthetase functions in the citric acid cycle (TCA), coupling the hydrolysis of succinyl-CoA to the synthesis of either ATP or GTP and thus represents the only step of substrate-level phosphorylation in the TCA. The beta subunit provides nucleotide specificity of the enzyme and binds the substrate succinate, while the binding sites for coenzyme A and phosphate are found in the alpha subunit.</text>
</comment>
<comment type="catalytic activity">
    <reaction evidence="1">
        <text>succinate + ATP + CoA = succinyl-CoA + ADP + phosphate</text>
        <dbReference type="Rhea" id="RHEA:17661"/>
        <dbReference type="ChEBI" id="CHEBI:30031"/>
        <dbReference type="ChEBI" id="CHEBI:30616"/>
        <dbReference type="ChEBI" id="CHEBI:43474"/>
        <dbReference type="ChEBI" id="CHEBI:57287"/>
        <dbReference type="ChEBI" id="CHEBI:57292"/>
        <dbReference type="ChEBI" id="CHEBI:456216"/>
        <dbReference type="EC" id="6.2.1.5"/>
    </reaction>
    <physiologicalReaction direction="right-to-left" evidence="1">
        <dbReference type="Rhea" id="RHEA:17663"/>
    </physiologicalReaction>
</comment>
<comment type="catalytic activity">
    <reaction evidence="1">
        <text>GTP + succinate + CoA = succinyl-CoA + GDP + phosphate</text>
        <dbReference type="Rhea" id="RHEA:22120"/>
        <dbReference type="ChEBI" id="CHEBI:30031"/>
        <dbReference type="ChEBI" id="CHEBI:37565"/>
        <dbReference type="ChEBI" id="CHEBI:43474"/>
        <dbReference type="ChEBI" id="CHEBI:57287"/>
        <dbReference type="ChEBI" id="CHEBI:57292"/>
        <dbReference type="ChEBI" id="CHEBI:58189"/>
    </reaction>
    <physiologicalReaction direction="right-to-left" evidence="1">
        <dbReference type="Rhea" id="RHEA:22122"/>
    </physiologicalReaction>
</comment>
<comment type="cofactor">
    <cofactor evidence="1">
        <name>Mg(2+)</name>
        <dbReference type="ChEBI" id="CHEBI:18420"/>
    </cofactor>
    <text evidence="1">Binds 1 Mg(2+) ion per subunit.</text>
</comment>
<comment type="pathway">
    <text evidence="1">Carbohydrate metabolism; tricarboxylic acid cycle; succinate from succinyl-CoA (ligase route): step 1/1.</text>
</comment>
<comment type="subunit">
    <text evidence="1">Heterotetramer of two alpha and two beta subunits.</text>
</comment>
<comment type="similarity">
    <text evidence="1">Belongs to the succinate/malate CoA ligase beta subunit family.</text>
</comment>
<keyword id="KW-0067">ATP-binding</keyword>
<keyword id="KW-0436">Ligase</keyword>
<keyword id="KW-0460">Magnesium</keyword>
<keyword id="KW-0479">Metal-binding</keyword>
<keyword id="KW-0547">Nucleotide-binding</keyword>
<keyword id="KW-1185">Reference proteome</keyword>
<keyword id="KW-0816">Tricarboxylic acid cycle</keyword>
<proteinExistence type="inferred from homology"/>
<organism>
    <name type="scientific">Halalkalibacterium halodurans (strain ATCC BAA-125 / DSM 18197 / FERM 7344 / JCM 9153 / C-125)</name>
    <name type="common">Bacillus halodurans</name>
    <dbReference type="NCBI Taxonomy" id="272558"/>
    <lineage>
        <taxon>Bacteria</taxon>
        <taxon>Bacillati</taxon>
        <taxon>Bacillota</taxon>
        <taxon>Bacilli</taxon>
        <taxon>Bacillales</taxon>
        <taxon>Bacillaceae</taxon>
        <taxon>Halalkalibacterium (ex Joshi et al. 2022)</taxon>
    </lineage>
</organism>
<evidence type="ECO:0000255" key="1">
    <source>
        <dbReference type="HAMAP-Rule" id="MF_00558"/>
    </source>
</evidence>
<name>SUCC_HALH5</name>
<gene>
    <name evidence="1" type="primary">sucC</name>
    <name type="ordered locus">BH2470</name>
</gene>
<accession>Q9KA20</accession>
<dbReference type="EC" id="6.2.1.5" evidence="1"/>
<dbReference type="EMBL" id="BA000004">
    <property type="protein sequence ID" value="BAB06189.1"/>
    <property type="molecule type" value="Genomic_DNA"/>
</dbReference>
<dbReference type="PIR" id="F83958">
    <property type="entry name" value="F83958"/>
</dbReference>
<dbReference type="RefSeq" id="WP_010898623.1">
    <property type="nucleotide sequence ID" value="NC_002570.2"/>
</dbReference>
<dbReference type="SMR" id="Q9KA20"/>
<dbReference type="STRING" id="272558.gene:10728368"/>
<dbReference type="GeneID" id="87597991"/>
<dbReference type="KEGG" id="bha:BH2470"/>
<dbReference type="eggNOG" id="COG0045">
    <property type="taxonomic scope" value="Bacteria"/>
</dbReference>
<dbReference type="HOGENOM" id="CLU_037430_0_2_9"/>
<dbReference type="OrthoDB" id="9802602at2"/>
<dbReference type="UniPathway" id="UPA00223">
    <property type="reaction ID" value="UER00999"/>
</dbReference>
<dbReference type="Proteomes" id="UP000001258">
    <property type="component" value="Chromosome"/>
</dbReference>
<dbReference type="GO" id="GO:0005829">
    <property type="term" value="C:cytosol"/>
    <property type="evidence" value="ECO:0007669"/>
    <property type="project" value="TreeGrafter"/>
</dbReference>
<dbReference type="GO" id="GO:0042709">
    <property type="term" value="C:succinate-CoA ligase complex"/>
    <property type="evidence" value="ECO:0007669"/>
    <property type="project" value="TreeGrafter"/>
</dbReference>
<dbReference type="GO" id="GO:0005524">
    <property type="term" value="F:ATP binding"/>
    <property type="evidence" value="ECO:0007669"/>
    <property type="project" value="UniProtKB-UniRule"/>
</dbReference>
<dbReference type="GO" id="GO:0000287">
    <property type="term" value="F:magnesium ion binding"/>
    <property type="evidence" value="ECO:0007669"/>
    <property type="project" value="UniProtKB-UniRule"/>
</dbReference>
<dbReference type="GO" id="GO:0004775">
    <property type="term" value="F:succinate-CoA ligase (ADP-forming) activity"/>
    <property type="evidence" value="ECO:0007669"/>
    <property type="project" value="UniProtKB-UniRule"/>
</dbReference>
<dbReference type="GO" id="GO:0004776">
    <property type="term" value="F:succinate-CoA ligase (GDP-forming) activity"/>
    <property type="evidence" value="ECO:0007669"/>
    <property type="project" value="RHEA"/>
</dbReference>
<dbReference type="GO" id="GO:0006104">
    <property type="term" value="P:succinyl-CoA metabolic process"/>
    <property type="evidence" value="ECO:0007669"/>
    <property type="project" value="TreeGrafter"/>
</dbReference>
<dbReference type="GO" id="GO:0006099">
    <property type="term" value="P:tricarboxylic acid cycle"/>
    <property type="evidence" value="ECO:0007669"/>
    <property type="project" value="UniProtKB-UniRule"/>
</dbReference>
<dbReference type="FunFam" id="3.30.1490.20:FF:000002">
    <property type="entry name" value="Succinate--CoA ligase [ADP-forming] subunit beta"/>
    <property type="match status" value="1"/>
</dbReference>
<dbReference type="FunFam" id="3.30.470.20:FF:000002">
    <property type="entry name" value="Succinate--CoA ligase [ADP-forming] subunit beta"/>
    <property type="match status" value="1"/>
</dbReference>
<dbReference type="FunFam" id="3.40.50.261:FF:000001">
    <property type="entry name" value="Succinate--CoA ligase [ADP-forming] subunit beta"/>
    <property type="match status" value="1"/>
</dbReference>
<dbReference type="Gene3D" id="3.30.1490.20">
    <property type="entry name" value="ATP-grasp fold, A domain"/>
    <property type="match status" value="1"/>
</dbReference>
<dbReference type="Gene3D" id="3.30.470.20">
    <property type="entry name" value="ATP-grasp fold, B domain"/>
    <property type="match status" value="1"/>
</dbReference>
<dbReference type="Gene3D" id="3.40.50.261">
    <property type="entry name" value="Succinyl-CoA synthetase domains"/>
    <property type="match status" value="1"/>
</dbReference>
<dbReference type="HAMAP" id="MF_00558">
    <property type="entry name" value="Succ_CoA_beta"/>
    <property type="match status" value="1"/>
</dbReference>
<dbReference type="InterPro" id="IPR011761">
    <property type="entry name" value="ATP-grasp"/>
</dbReference>
<dbReference type="InterPro" id="IPR013650">
    <property type="entry name" value="ATP-grasp_succ-CoA_synth-type"/>
</dbReference>
<dbReference type="InterPro" id="IPR013815">
    <property type="entry name" value="ATP_grasp_subdomain_1"/>
</dbReference>
<dbReference type="InterPro" id="IPR017866">
    <property type="entry name" value="Succ-CoA_synthase_bsu_CS"/>
</dbReference>
<dbReference type="InterPro" id="IPR005811">
    <property type="entry name" value="SUCC_ACL_C"/>
</dbReference>
<dbReference type="InterPro" id="IPR005809">
    <property type="entry name" value="Succ_CoA_ligase-like_bsu"/>
</dbReference>
<dbReference type="InterPro" id="IPR016102">
    <property type="entry name" value="Succinyl-CoA_synth-like"/>
</dbReference>
<dbReference type="NCBIfam" id="NF001913">
    <property type="entry name" value="PRK00696.1"/>
    <property type="match status" value="1"/>
</dbReference>
<dbReference type="NCBIfam" id="TIGR01016">
    <property type="entry name" value="sucCoAbeta"/>
    <property type="match status" value="1"/>
</dbReference>
<dbReference type="PANTHER" id="PTHR11815:SF10">
    <property type="entry name" value="SUCCINATE--COA LIGASE [GDP-FORMING] SUBUNIT BETA, MITOCHONDRIAL"/>
    <property type="match status" value="1"/>
</dbReference>
<dbReference type="PANTHER" id="PTHR11815">
    <property type="entry name" value="SUCCINYL-COA SYNTHETASE BETA CHAIN"/>
    <property type="match status" value="1"/>
</dbReference>
<dbReference type="Pfam" id="PF08442">
    <property type="entry name" value="ATP-grasp_2"/>
    <property type="match status" value="1"/>
</dbReference>
<dbReference type="Pfam" id="PF00549">
    <property type="entry name" value="Ligase_CoA"/>
    <property type="match status" value="1"/>
</dbReference>
<dbReference type="PIRSF" id="PIRSF001554">
    <property type="entry name" value="SucCS_beta"/>
    <property type="match status" value="1"/>
</dbReference>
<dbReference type="SUPFAM" id="SSF56059">
    <property type="entry name" value="Glutathione synthetase ATP-binding domain-like"/>
    <property type="match status" value="1"/>
</dbReference>
<dbReference type="SUPFAM" id="SSF52210">
    <property type="entry name" value="Succinyl-CoA synthetase domains"/>
    <property type="match status" value="1"/>
</dbReference>
<dbReference type="PROSITE" id="PS50975">
    <property type="entry name" value="ATP_GRASP"/>
    <property type="match status" value="1"/>
</dbReference>
<dbReference type="PROSITE" id="PS01217">
    <property type="entry name" value="SUCCINYL_COA_LIG_3"/>
    <property type="match status" value="1"/>
</dbReference>